<protein>
    <recommendedName>
        <fullName evidence="1">2,3-bisphosphoglycerate-independent phosphoglycerate mutase</fullName>
        <shortName evidence="1">BPG-independent PGAM</shortName>
        <shortName evidence="1">Phosphoglyceromutase</shortName>
        <shortName evidence="1">iPGM</shortName>
        <ecNumber evidence="1">5.4.2.12</ecNumber>
    </recommendedName>
</protein>
<sequence>MSTPPRPLALLILDGWGYSEETASNAIHAAHTPIWDTLWDRYPHTIIRASGAEVGLPNEQMGNSEVGHLNLGSGRVIYQEYTRVNRALRTGSFFTNHTLTEAVDRAVKSDKAIHILGLLSPSGIHCHEDHIHAMVELAIKRRCQEVYLHAFLDGRDTAPKSAQASILAMQAKFTELGKGRFASLIGRYYGMDRDHRWPRIQAAYNLIATGQAEYEAESAKQALAMAYERGETDEFVQATRIVPSGKAPVQVKDGDVIIFMNFRSDRARQITRAFIEPDFTGFERLYWPKLAQFVSLTEYSKEFDIPVAFPSEKPQNTFGQVLAKLGLHQLRIAETEKYAHVTFFFNGGREQPFEGEDRILIPSPQVDTYDQKPEMSAVEVTDNIVKAIESDKYDVIICNYANPDMVGHTGDFNATVKAIETIDQCLGRVWAALQSAGGELIITADHGNAEKMYNAQYQQPHTAHTHNAVPFIFVSERAAIASANGSLADVTPTMLYLMNIKPPPEMSEHRLIELSSP</sequence>
<reference key="1">
    <citation type="journal article" date="2006" name="Appl. Environ. Microbiol.">
        <title>Complete genome sequence of the marine, chemolithoautotrophic, ammonia-oxidizing bacterium Nitrosococcus oceani ATCC 19707.</title>
        <authorList>
            <person name="Klotz M.G."/>
            <person name="Arp D.J."/>
            <person name="Chain P.S.G."/>
            <person name="El-Sheikh A.F."/>
            <person name="Hauser L.J."/>
            <person name="Hommes N.G."/>
            <person name="Larimer F.W."/>
            <person name="Malfatti S.A."/>
            <person name="Norton J.M."/>
            <person name="Poret-Peterson A.T."/>
            <person name="Vergez L.M."/>
            <person name="Ward B.B."/>
        </authorList>
    </citation>
    <scope>NUCLEOTIDE SEQUENCE [LARGE SCALE GENOMIC DNA]</scope>
    <source>
        <strain>ATCC 19707 / BCRC 17464 / JCM 30415 / NCIMB 11848 / C-107</strain>
    </source>
</reference>
<accession>Q3JF23</accession>
<dbReference type="EC" id="5.4.2.12" evidence="1"/>
<dbReference type="EMBL" id="CP000127">
    <property type="protein sequence ID" value="ABA56573.1"/>
    <property type="molecule type" value="Genomic_DNA"/>
</dbReference>
<dbReference type="RefSeq" id="WP_011330205.1">
    <property type="nucleotide sequence ID" value="NC_007484.1"/>
</dbReference>
<dbReference type="SMR" id="Q3JF23"/>
<dbReference type="FunCoup" id="Q3JF23">
    <property type="interactions" value="422"/>
</dbReference>
<dbReference type="STRING" id="323261.Noc_0031"/>
<dbReference type="KEGG" id="noc:Noc_0031"/>
<dbReference type="eggNOG" id="COG0696">
    <property type="taxonomic scope" value="Bacteria"/>
</dbReference>
<dbReference type="HOGENOM" id="CLU_026099_2_0_6"/>
<dbReference type="InParanoid" id="Q3JF23"/>
<dbReference type="UniPathway" id="UPA00109">
    <property type="reaction ID" value="UER00186"/>
</dbReference>
<dbReference type="Proteomes" id="UP000006838">
    <property type="component" value="Chromosome"/>
</dbReference>
<dbReference type="GO" id="GO:0005829">
    <property type="term" value="C:cytosol"/>
    <property type="evidence" value="ECO:0007669"/>
    <property type="project" value="TreeGrafter"/>
</dbReference>
<dbReference type="GO" id="GO:0030145">
    <property type="term" value="F:manganese ion binding"/>
    <property type="evidence" value="ECO:0007669"/>
    <property type="project" value="UniProtKB-UniRule"/>
</dbReference>
<dbReference type="GO" id="GO:0004619">
    <property type="term" value="F:phosphoglycerate mutase activity"/>
    <property type="evidence" value="ECO:0007669"/>
    <property type="project" value="UniProtKB-EC"/>
</dbReference>
<dbReference type="GO" id="GO:0006007">
    <property type="term" value="P:glucose catabolic process"/>
    <property type="evidence" value="ECO:0007669"/>
    <property type="project" value="InterPro"/>
</dbReference>
<dbReference type="GO" id="GO:0006096">
    <property type="term" value="P:glycolytic process"/>
    <property type="evidence" value="ECO:0007669"/>
    <property type="project" value="UniProtKB-UniRule"/>
</dbReference>
<dbReference type="CDD" id="cd16010">
    <property type="entry name" value="iPGM"/>
    <property type="match status" value="1"/>
</dbReference>
<dbReference type="FunFam" id="3.40.1450.10:FF:000001">
    <property type="entry name" value="2,3-bisphosphoglycerate-independent phosphoglycerate mutase"/>
    <property type="match status" value="1"/>
</dbReference>
<dbReference type="Gene3D" id="3.40.720.10">
    <property type="entry name" value="Alkaline Phosphatase, subunit A"/>
    <property type="match status" value="1"/>
</dbReference>
<dbReference type="Gene3D" id="3.40.1450.10">
    <property type="entry name" value="BPG-independent phosphoglycerate mutase, domain B"/>
    <property type="match status" value="1"/>
</dbReference>
<dbReference type="HAMAP" id="MF_01038">
    <property type="entry name" value="GpmI"/>
    <property type="match status" value="1"/>
</dbReference>
<dbReference type="InterPro" id="IPR017850">
    <property type="entry name" value="Alkaline_phosphatase_core_sf"/>
</dbReference>
<dbReference type="InterPro" id="IPR011258">
    <property type="entry name" value="BPG-indep_PGM_N"/>
</dbReference>
<dbReference type="InterPro" id="IPR006124">
    <property type="entry name" value="Metalloenzyme"/>
</dbReference>
<dbReference type="InterPro" id="IPR036646">
    <property type="entry name" value="PGAM_B_sf"/>
</dbReference>
<dbReference type="InterPro" id="IPR005995">
    <property type="entry name" value="Pgm_bpd_ind"/>
</dbReference>
<dbReference type="NCBIfam" id="TIGR01307">
    <property type="entry name" value="pgm_bpd_ind"/>
    <property type="match status" value="1"/>
</dbReference>
<dbReference type="PANTHER" id="PTHR31637">
    <property type="entry name" value="2,3-BISPHOSPHOGLYCERATE-INDEPENDENT PHOSPHOGLYCERATE MUTASE"/>
    <property type="match status" value="1"/>
</dbReference>
<dbReference type="PANTHER" id="PTHR31637:SF0">
    <property type="entry name" value="2,3-BISPHOSPHOGLYCERATE-INDEPENDENT PHOSPHOGLYCERATE MUTASE"/>
    <property type="match status" value="1"/>
</dbReference>
<dbReference type="Pfam" id="PF06415">
    <property type="entry name" value="iPGM_N"/>
    <property type="match status" value="1"/>
</dbReference>
<dbReference type="Pfam" id="PF01676">
    <property type="entry name" value="Metalloenzyme"/>
    <property type="match status" value="1"/>
</dbReference>
<dbReference type="PIRSF" id="PIRSF001492">
    <property type="entry name" value="IPGAM"/>
    <property type="match status" value="1"/>
</dbReference>
<dbReference type="SUPFAM" id="SSF64158">
    <property type="entry name" value="2,3-Bisphosphoglycerate-independent phosphoglycerate mutase, substrate-binding domain"/>
    <property type="match status" value="1"/>
</dbReference>
<dbReference type="SUPFAM" id="SSF53649">
    <property type="entry name" value="Alkaline phosphatase-like"/>
    <property type="match status" value="1"/>
</dbReference>
<keyword id="KW-0324">Glycolysis</keyword>
<keyword id="KW-0413">Isomerase</keyword>
<keyword id="KW-0464">Manganese</keyword>
<keyword id="KW-0479">Metal-binding</keyword>
<keyword id="KW-1185">Reference proteome</keyword>
<evidence type="ECO:0000255" key="1">
    <source>
        <dbReference type="HAMAP-Rule" id="MF_01038"/>
    </source>
</evidence>
<comment type="function">
    <text evidence="1">Catalyzes the interconversion of 2-phosphoglycerate and 3-phosphoglycerate.</text>
</comment>
<comment type="catalytic activity">
    <reaction evidence="1">
        <text>(2R)-2-phosphoglycerate = (2R)-3-phosphoglycerate</text>
        <dbReference type="Rhea" id="RHEA:15901"/>
        <dbReference type="ChEBI" id="CHEBI:58272"/>
        <dbReference type="ChEBI" id="CHEBI:58289"/>
        <dbReference type="EC" id="5.4.2.12"/>
    </reaction>
</comment>
<comment type="cofactor">
    <cofactor evidence="1">
        <name>Mn(2+)</name>
        <dbReference type="ChEBI" id="CHEBI:29035"/>
    </cofactor>
    <text evidence="1">Binds 2 manganese ions per subunit.</text>
</comment>
<comment type="pathway">
    <text evidence="1">Carbohydrate degradation; glycolysis; pyruvate from D-glyceraldehyde 3-phosphate: step 3/5.</text>
</comment>
<comment type="subunit">
    <text evidence="1">Monomer.</text>
</comment>
<comment type="similarity">
    <text evidence="1">Belongs to the BPG-independent phosphoglycerate mutase family.</text>
</comment>
<proteinExistence type="inferred from homology"/>
<feature type="chain" id="PRO_0000212178" description="2,3-bisphosphoglycerate-independent phosphoglycerate mutase">
    <location>
        <begin position="1"/>
        <end position="517"/>
    </location>
</feature>
<feature type="active site" description="Phosphoserine intermediate" evidence="1">
    <location>
        <position position="64"/>
    </location>
</feature>
<feature type="binding site" evidence="1">
    <location>
        <position position="14"/>
    </location>
    <ligand>
        <name>Mn(2+)</name>
        <dbReference type="ChEBI" id="CHEBI:29035"/>
        <label>2</label>
    </ligand>
</feature>
<feature type="binding site" evidence="1">
    <location>
        <position position="64"/>
    </location>
    <ligand>
        <name>Mn(2+)</name>
        <dbReference type="ChEBI" id="CHEBI:29035"/>
        <label>2</label>
    </ligand>
</feature>
<feature type="binding site" evidence="1">
    <location>
        <position position="125"/>
    </location>
    <ligand>
        <name>substrate</name>
    </ligand>
</feature>
<feature type="binding site" evidence="1">
    <location>
        <begin position="155"/>
        <end position="156"/>
    </location>
    <ligand>
        <name>substrate</name>
    </ligand>
</feature>
<feature type="binding site" evidence="1">
    <location>
        <position position="187"/>
    </location>
    <ligand>
        <name>substrate</name>
    </ligand>
</feature>
<feature type="binding site" evidence="1">
    <location>
        <position position="193"/>
    </location>
    <ligand>
        <name>substrate</name>
    </ligand>
</feature>
<feature type="binding site" evidence="1">
    <location>
        <begin position="263"/>
        <end position="266"/>
    </location>
    <ligand>
        <name>substrate</name>
    </ligand>
</feature>
<feature type="binding site" evidence="1">
    <location>
        <position position="337"/>
    </location>
    <ligand>
        <name>substrate</name>
    </ligand>
</feature>
<feature type="binding site" evidence="1">
    <location>
        <position position="404"/>
    </location>
    <ligand>
        <name>Mn(2+)</name>
        <dbReference type="ChEBI" id="CHEBI:29035"/>
        <label>1</label>
    </ligand>
</feature>
<feature type="binding site" evidence="1">
    <location>
        <position position="408"/>
    </location>
    <ligand>
        <name>Mn(2+)</name>
        <dbReference type="ChEBI" id="CHEBI:29035"/>
        <label>1</label>
    </ligand>
</feature>
<feature type="binding site" evidence="1">
    <location>
        <position position="445"/>
    </location>
    <ligand>
        <name>Mn(2+)</name>
        <dbReference type="ChEBI" id="CHEBI:29035"/>
        <label>2</label>
    </ligand>
</feature>
<feature type="binding site" evidence="1">
    <location>
        <position position="446"/>
    </location>
    <ligand>
        <name>Mn(2+)</name>
        <dbReference type="ChEBI" id="CHEBI:29035"/>
        <label>2</label>
    </ligand>
</feature>
<feature type="binding site" evidence="1">
    <location>
        <position position="464"/>
    </location>
    <ligand>
        <name>Mn(2+)</name>
        <dbReference type="ChEBI" id="CHEBI:29035"/>
        <label>1</label>
    </ligand>
</feature>
<organism>
    <name type="scientific">Nitrosococcus oceani (strain ATCC 19707 / BCRC 17464 / JCM 30415 / NCIMB 11848 / C-107)</name>
    <dbReference type="NCBI Taxonomy" id="323261"/>
    <lineage>
        <taxon>Bacteria</taxon>
        <taxon>Pseudomonadati</taxon>
        <taxon>Pseudomonadota</taxon>
        <taxon>Gammaproteobacteria</taxon>
        <taxon>Chromatiales</taxon>
        <taxon>Chromatiaceae</taxon>
        <taxon>Nitrosococcus</taxon>
    </lineage>
</organism>
<gene>
    <name evidence="1" type="primary">gpmI</name>
    <name type="ordered locus">Noc_0031</name>
</gene>
<name>GPMI_NITOC</name>